<proteinExistence type="evidence at transcript level"/>
<keyword id="KW-0053">Apoptosis</keyword>
<keyword id="KW-0175">Coiled coil</keyword>
<keyword id="KW-1015">Disulfide bond</keyword>
<keyword id="KW-0342">GTP-binding</keyword>
<keyword id="KW-0378">Hydrolase</keyword>
<keyword id="KW-0446">Lipid-binding</keyword>
<keyword id="KW-0460">Magnesium</keyword>
<keyword id="KW-0472">Membrane</keyword>
<keyword id="KW-0479">Metal-binding</keyword>
<keyword id="KW-0496">Mitochondrion</keyword>
<keyword id="KW-0999">Mitochondrion inner membrane</keyword>
<keyword id="KW-0547">Nucleotide-binding</keyword>
<keyword id="KW-1185">Reference proteome</keyword>
<keyword id="KW-0809">Transit peptide</keyword>
<keyword id="KW-0812">Transmembrane</keyword>
<keyword id="KW-1133">Transmembrane helix</keyword>
<accession>Q5F499</accession>
<reference evidence="8" key="1">
    <citation type="journal article" date="2005" name="Genome Biol.">
        <title>Full-length cDNAs from chicken bursal lymphocytes to facilitate gene function analysis.</title>
        <authorList>
            <person name="Caldwell R.B."/>
            <person name="Kierzek A.M."/>
            <person name="Arakawa H."/>
            <person name="Bezzubov Y."/>
            <person name="Zaim J."/>
            <person name="Fiedler P."/>
            <person name="Kutter S."/>
            <person name="Blagodatski A."/>
            <person name="Kostovska D."/>
            <person name="Koter M."/>
            <person name="Plachy J."/>
            <person name="Carninci P."/>
            <person name="Hayashizaki Y."/>
            <person name="Buerstedde J.-M."/>
        </authorList>
    </citation>
    <scope>NUCLEOTIDE SEQUENCE [LARGE SCALE MRNA]</scope>
    <source>
        <strain evidence="8">CB</strain>
        <tissue evidence="8">Bursa of Fabricius</tissue>
    </source>
</reference>
<dbReference type="EC" id="3.6.5.5" evidence="2"/>
<dbReference type="EMBL" id="AJ851401">
    <property type="protein sequence ID" value="CAH65035.1"/>
    <property type="molecule type" value="mRNA"/>
</dbReference>
<dbReference type="RefSeq" id="NP_001034398.1">
    <property type="nucleotide sequence ID" value="NM_001039309.1"/>
</dbReference>
<dbReference type="SMR" id="Q5F499"/>
<dbReference type="FunCoup" id="Q5F499">
    <property type="interactions" value="2764"/>
</dbReference>
<dbReference type="STRING" id="9031.ENSGALP00000053900"/>
<dbReference type="PaxDb" id="9031-ENSGALP00000042204"/>
<dbReference type="GeneID" id="424900"/>
<dbReference type="KEGG" id="gga:424900"/>
<dbReference type="CTD" id="4976"/>
<dbReference type="VEuPathDB" id="HostDB:geneid_424900"/>
<dbReference type="eggNOG" id="KOG0447">
    <property type="taxonomic scope" value="Eukaryota"/>
</dbReference>
<dbReference type="InParanoid" id="Q5F499"/>
<dbReference type="OrthoDB" id="415706at2759"/>
<dbReference type="PhylomeDB" id="Q5F499"/>
<dbReference type="PRO" id="PR:Q5F499"/>
<dbReference type="Proteomes" id="UP000000539">
    <property type="component" value="Unassembled WGS sequence"/>
</dbReference>
<dbReference type="GO" id="GO:0005737">
    <property type="term" value="C:cytoplasm"/>
    <property type="evidence" value="ECO:0000318"/>
    <property type="project" value="GO_Central"/>
</dbReference>
<dbReference type="GO" id="GO:0005874">
    <property type="term" value="C:microtubule"/>
    <property type="evidence" value="ECO:0000318"/>
    <property type="project" value="GO_Central"/>
</dbReference>
<dbReference type="GO" id="GO:0005743">
    <property type="term" value="C:mitochondrial inner membrane"/>
    <property type="evidence" value="ECO:0007669"/>
    <property type="project" value="UniProtKB-SubCell"/>
</dbReference>
<dbReference type="GO" id="GO:0005758">
    <property type="term" value="C:mitochondrial intermembrane space"/>
    <property type="evidence" value="ECO:0000318"/>
    <property type="project" value="GO_Central"/>
</dbReference>
<dbReference type="GO" id="GO:0031966">
    <property type="term" value="C:mitochondrial membrane"/>
    <property type="evidence" value="ECO:0000318"/>
    <property type="project" value="GO_Central"/>
</dbReference>
<dbReference type="GO" id="GO:1901612">
    <property type="term" value="F:cardiolipin binding"/>
    <property type="evidence" value="ECO:0000250"/>
    <property type="project" value="UniProtKB"/>
</dbReference>
<dbReference type="GO" id="GO:0005525">
    <property type="term" value="F:GTP binding"/>
    <property type="evidence" value="ECO:0007669"/>
    <property type="project" value="UniProtKB-KW"/>
</dbReference>
<dbReference type="GO" id="GO:0003924">
    <property type="term" value="F:GTPase activity"/>
    <property type="evidence" value="ECO:0000250"/>
    <property type="project" value="UniProtKB"/>
</dbReference>
<dbReference type="GO" id="GO:0140523">
    <property type="term" value="F:GTPase-dependent fusogenic activity"/>
    <property type="evidence" value="ECO:0000250"/>
    <property type="project" value="UniProtKB"/>
</dbReference>
<dbReference type="GO" id="GO:0180020">
    <property type="term" value="F:membrane bending activity"/>
    <property type="evidence" value="ECO:0000250"/>
    <property type="project" value="UniProtKB"/>
</dbReference>
<dbReference type="GO" id="GO:0046872">
    <property type="term" value="F:metal ion binding"/>
    <property type="evidence" value="ECO:0007669"/>
    <property type="project" value="UniProtKB-KW"/>
</dbReference>
<dbReference type="GO" id="GO:0008017">
    <property type="term" value="F:microtubule binding"/>
    <property type="evidence" value="ECO:0000318"/>
    <property type="project" value="GO_Central"/>
</dbReference>
<dbReference type="GO" id="GO:0070300">
    <property type="term" value="F:phosphatidic acid binding"/>
    <property type="evidence" value="ECO:0000250"/>
    <property type="project" value="UniProtKB"/>
</dbReference>
<dbReference type="GO" id="GO:0006915">
    <property type="term" value="P:apoptotic process"/>
    <property type="evidence" value="ECO:0007669"/>
    <property type="project" value="UniProtKB-KW"/>
</dbReference>
<dbReference type="GO" id="GO:0006897">
    <property type="term" value="P:endocytosis"/>
    <property type="evidence" value="ECO:0000318"/>
    <property type="project" value="GO_Central"/>
</dbReference>
<dbReference type="GO" id="GO:0046039">
    <property type="term" value="P:GTP metabolic process"/>
    <property type="evidence" value="ECO:0000250"/>
    <property type="project" value="UniProtKB"/>
</dbReference>
<dbReference type="GO" id="GO:0048312">
    <property type="term" value="P:intracellular distribution of mitochondria"/>
    <property type="evidence" value="ECO:0000318"/>
    <property type="project" value="GO_Central"/>
</dbReference>
<dbReference type="GO" id="GO:0097749">
    <property type="term" value="P:membrane tubulation"/>
    <property type="evidence" value="ECO:0000250"/>
    <property type="project" value="UniProtKB"/>
</dbReference>
<dbReference type="GO" id="GO:0000266">
    <property type="term" value="P:mitochondrial fission"/>
    <property type="evidence" value="ECO:0000318"/>
    <property type="project" value="GO_Central"/>
</dbReference>
<dbReference type="GO" id="GO:0008053">
    <property type="term" value="P:mitochondrial fusion"/>
    <property type="evidence" value="ECO:0000250"/>
    <property type="project" value="UniProtKB"/>
</dbReference>
<dbReference type="GO" id="GO:1990627">
    <property type="term" value="P:mitochondrial inner membrane fusion"/>
    <property type="evidence" value="ECO:0000250"/>
    <property type="project" value="UniProtKB"/>
</dbReference>
<dbReference type="GO" id="GO:0016559">
    <property type="term" value="P:peroxisome fission"/>
    <property type="evidence" value="ECO:0000318"/>
    <property type="project" value="GO_Central"/>
</dbReference>
<dbReference type="GO" id="GO:0032740">
    <property type="term" value="P:positive regulation of interleukin-17 production"/>
    <property type="evidence" value="ECO:0000250"/>
    <property type="project" value="UniProtKB"/>
</dbReference>
<dbReference type="GO" id="GO:2000330">
    <property type="term" value="P:positive regulation of T-helper 17 cell lineage commitment"/>
    <property type="evidence" value="ECO:0000250"/>
    <property type="project" value="UniProtKB"/>
</dbReference>
<dbReference type="CDD" id="cd08771">
    <property type="entry name" value="DLP_1"/>
    <property type="match status" value="1"/>
</dbReference>
<dbReference type="FunFam" id="3.40.50.300:FF:000171">
    <property type="entry name" value="Dynamin-like 120 kDa protein, mitochondrial"/>
    <property type="match status" value="1"/>
</dbReference>
<dbReference type="Gene3D" id="3.40.50.300">
    <property type="entry name" value="P-loop containing nucleotide triphosphate hydrolases"/>
    <property type="match status" value="1"/>
</dbReference>
<dbReference type="InterPro" id="IPR022812">
    <property type="entry name" value="Dynamin"/>
</dbReference>
<dbReference type="InterPro" id="IPR001401">
    <property type="entry name" value="Dynamin_GTPase"/>
</dbReference>
<dbReference type="InterPro" id="IPR045063">
    <property type="entry name" value="Dynamin_N"/>
</dbReference>
<dbReference type="InterPro" id="IPR030381">
    <property type="entry name" value="G_DYNAMIN_dom"/>
</dbReference>
<dbReference type="InterPro" id="IPR045817">
    <property type="entry name" value="OPA1_C"/>
</dbReference>
<dbReference type="InterPro" id="IPR027417">
    <property type="entry name" value="P-loop_NTPase"/>
</dbReference>
<dbReference type="PANTHER" id="PTHR11566">
    <property type="entry name" value="DYNAMIN"/>
    <property type="match status" value="1"/>
</dbReference>
<dbReference type="PANTHER" id="PTHR11566:SF67">
    <property type="entry name" value="DYNAMIN-LIKE 120 KDA PROTEIN, MITOCHONDRIAL"/>
    <property type="match status" value="1"/>
</dbReference>
<dbReference type="Pfam" id="PF00350">
    <property type="entry name" value="Dynamin_N"/>
    <property type="match status" value="1"/>
</dbReference>
<dbReference type="Pfam" id="PF19434">
    <property type="entry name" value="OPA1_C"/>
    <property type="match status" value="1"/>
</dbReference>
<dbReference type="PRINTS" id="PR00195">
    <property type="entry name" value="DYNAMIN"/>
</dbReference>
<dbReference type="SMART" id="SM00053">
    <property type="entry name" value="DYNc"/>
    <property type="match status" value="1"/>
</dbReference>
<dbReference type="SUPFAM" id="SSF52540">
    <property type="entry name" value="P-loop containing nucleoside triphosphate hydrolases"/>
    <property type="match status" value="1"/>
</dbReference>
<dbReference type="PROSITE" id="PS51718">
    <property type="entry name" value="G_DYNAMIN_2"/>
    <property type="match status" value="1"/>
</dbReference>
<comment type="function">
    <text evidence="2 3">Dynamin-related GTPase that is essential for normal mitochondrial morphology by mediating fusion of the mitochondrial inner membranes, regulating cristae morphology and maintaining respiratory chain function (By similarity). Exists in two forms: the transmembrane, long form (Dynamin-like GTPase OPA1, long form; L-OPA1), which is tethered to the inner mitochondrial membrane, and the short soluble form (Dynamin-like GTPase OPA1, short form; S-OPA1), which results from proteolytic cleavage and localizes in the intermembrane space (By similarity). Both forms (L-OPA1 and S-OPA1) cooperate to catalyze the fusion of the mitochondrial inner membrane (By similarity). The equilibrium between L-OPA1 and S-OPA1 is essential: excess levels of S-OPA1, produced by cleavage by OMA1 following loss of mitochondrial membrane potential, lead to an impaired equilibrium between L-OPA1 and S-OPA1, inhibiting mitochondrial fusion (By similarity). The balance between L-OPA1 and S-OPA1 also influences cristae shape and morphology (By similarity). Its role in mitochondrial morphology is required for mitochondrial genome maintenance (By similarity).</text>
</comment>
<comment type="function">
    <molecule>Dynamin-like GTPase OPA1, long form</molecule>
    <text evidence="1 2">Constitutes the transmembrane long form (L-OPA1) that plays a central role in mitochondrial inner membrane fusion and cristae morphology (By similarity). L-OPA1 and the soluble short form (S-OPA1) form higher-order helical assemblies that coordinate the fusion of mitochondrial inner membranes (By similarity). Inner membrane-anchored L-OPA1 molecules initiate membrane remodeling by recruiting soluble S-OPA1 to rapidly polymerize into a flexible cylindrical scaffold encaging the mitochondrial inner membrane (By similarity). Once at the membrane surface, the formation of S-OPA1 helices induce bilayer curvature (By similarity). OPA1 dimerization through the paddle region, which inserts into cardiolipin-containing membrane, promotes GTP hydrolysis and the helical assembly of a flexible OPA1 lattice on the membrane, which drives membrane curvature and mitochondrial fusion (By similarity). Plays a role in the maintenance and remodeling of mitochondrial cristae, some invaginations of the mitochondrial inner membrane that provide an increase in the surface area (By similarity). Probably acts by forming helical filaments at the inside of inner membrane tubes with the shape and dimensions of crista junctions (By similarity).</text>
</comment>
<comment type="function">
    <molecule>Dynamin-like GTPase OPA1, short form</molecule>
    <text evidence="1 2">Constitutes the soluble short form (S-OPA1) generated by cleavage by OMA1, which plays a central role in mitochondrial inner membrane fusion and cristae morphology (By similarity). The transmembrane long form (L-OPA1) and the S-OPA1 form higher-order helical assemblies that coordinate the fusion of mitochondrial inner membranes (By similarity). Inner membrane-anchored L-OPA1 molecules initiate membrane remodeling by recruiting soluble S-OPA1 to rapidly polymerize into a flexible cylindrical scaffold encaging the mitochondrial inner membrane (By similarity). Once at the membrane surface, the formation of S-OPA1 helices induce bilayer curvature (By similarity). OPA1 dimerization through the paddle region, which inserts into cardiolipin-containing membrane, promotes GTP hydrolysis and the helical assembly of a flexible OPA1 lattice on the membrane, which drives membrane curvature and mitochondrial fusion (By similarity). Excess levels of S-OPA1 produced by cleavage by OMA1 following stress conditions that induce loss of mitochondrial membrane potential, lead to an impaired equilibrium between L-OPA1 and S-OPA1, thereby inhibiting mitochondrial fusion (By similarity). Plays a role in the maintenance and remodeling of mitochondrial cristae, some invaginations of the mitochondrial inner membrane that provide an increase in the surface area (By similarity). Probably acts by forming helical filaments at the inside of inner membrane tubes with the shape and dimensions of crista junctions (By similarity).</text>
</comment>
<comment type="catalytic activity">
    <reaction evidence="2">
        <text>GTP + H2O = GDP + phosphate + H(+)</text>
        <dbReference type="Rhea" id="RHEA:19669"/>
        <dbReference type="ChEBI" id="CHEBI:15377"/>
        <dbReference type="ChEBI" id="CHEBI:15378"/>
        <dbReference type="ChEBI" id="CHEBI:37565"/>
        <dbReference type="ChEBI" id="CHEBI:43474"/>
        <dbReference type="ChEBI" id="CHEBI:58189"/>
        <dbReference type="EC" id="3.6.5.5"/>
    </reaction>
</comment>
<comment type="subunit">
    <text evidence="2">Oligomeric complex consisting of membrane-bound and soluble forms of OPA1.</text>
</comment>
<comment type="subcellular location">
    <molecule>Dynamin-like GTPase OPA1, long form</molecule>
    <subcellularLocation>
        <location evidence="2">Mitochondrion inner membrane</location>
        <topology evidence="5">Single-pass membrane protein</topology>
    </subcellularLocation>
    <text evidence="2">Detected at contact sites between endoplasmic reticulum and mitochondrion membranes.</text>
</comment>
<comment type="subcellular location">
    <molecule>Dynamin-like GTPase OPA1, short form</molecule>
    <subcellularLocation>
        <location evidence="2">Mitochondrion intermembrane space</location>
    </subcellularLocation>
</comment>
<comment type="domain">
    <text evidence="2">The paddle region plays a major role in driving mitochondrial inner membrane fusion (By similarity). It binds lipid membranes enriched in negatively charged phospholipids, such as cardiolipin, and promotes membrane tubulation (By similarity). A conserved intramembrane region, named membrane insertion loop (MIL), within the paddle region inserts deeply into the bilayer, further stabilizing the interactions with cardiolipin-enriched membranes (By similarity). OPA1 dimerization through the paddle domain promotes the helical assembly of a flexible OPA1 lattice on the membrane, driving mitochondrial fusion in cells (By similarity).</text>
</comment>
<comment type="PTM">
    <text evidence="2">Cleaved by OMA1 or YME1L downstream of the transmembrane region in response to different signals to generate soluble forms (By similarity). Cleaved by OMA1 at position S1 following stress conditions, generating the short soluble form (Dynamin-like GTPase OPA1, short form; S-OPA1) (By similarity).</text>
</comment>
<comment type="similarity">
    <text evidence="6">Belongs to the TRAFAC class dynamin-like GTPase superfamily. Dynamin/Fzo/YdjA family.</text>
</comment>
<sequence>MWRTKAAAACVICRSLAHSNYGIKRKSPLQNLHLVSRSIHHPYHPSLKFQRRPLRISLQQFSSLNRLPLRKTKLLNVKYGYQSYRNFWLARLASRLLKIRYLILGSAVGGGYTAKKTYDQWEDMMPDLDEYKWIIPDFIWELDEHIDLEKLIKALPDADDLAKLLPDFEKIGESFTSLKGIFSPGYNLVSEVIGASDLLLLLGTPGETAFRATDQGYDSDKQYKKVSDKEKIDQLQEELLRTQLKYQRMLERLEKENKELRKLVLQRDDKGIHQRKLKKSLIDMYSEVLDILSDYDASYNTQDHLPRVVVVGDQSAGKTSVLEMIAQARIFPRGSGEMMTRSPVKVTLSEGPHHVALFKDSSREFDLTKEEDLAALRNEIEIRMRNSVKEGCTVSTETISLSVRGPGLQRMVLVDLPGVISTVTSGMAPDTKETIFSISKAYMQNPNAIILCIQDGSVDAERSIVTDLVSQMDPQGKRTIFVLTKVDLAEKNVASPSRIQQIIEGKLFPMKALGYFAVVTGKGNSSESIESIKEYEEEFFQNSKLLKTSMLKAHQVTTKNLSLAVSDCFWKMVRESVEQQADAFKATRFNLETEWKNNYPRLRELDRNELFEKAKNEILDEVISLTQVTPKHWEEILQKTLWERVSTHVIENIYLPAAQTMNSGTFNTTVDIKLKQWTDKQLPNKAVEVAWETLQEEFSRFMTEQKGKEHDDIFDKLKQAVKEESIKRHKWNERAEDSLRVIQHNALEDRSISDKQQWDAAIHFMEETLQSRLKDTESVIEDMVGPDWKKRWLYWISRTKEQNIRNETKNELEKLIKCNEEHAAYLANDEVTTVRKNLEARGITVDPCLIKDTWHQIYRRYFLKTALNHCNLCRRGFYYYQRHFVDSELECNDIVLFWRIQRMLAITANTLRQQLTNTEVRRLEKNVKEVLEDFAEDNEKKVKLLTGKRVQLAEDLKKVREIQEKLEAFIEALHQEK</sequence>
<protein>
    <recommendedName>
        <fullName>Dynamin-like GTPase OPA1, mitochondrial</fullName>
        <ecNumber evidence="2">3.6.5.5</ecNumber>
    </recommendedName>
    <alternativeName>
        <fullName>Optic atrophy protein 1 homolog</fullName>
    </alternativeName>
    <component>
        <recommendedName>
            <fullName evidence="7">Dynamin-like GTPase OPA1, long form</fullName>
            <shortName evidence="2">L-OPA1</shortName>
        </recommendedName>
    </component>
    <component>
        <recommendedName>
            <fullName evidence="7">Dynamin-like GTPase OPA1, short form</fullName>
            <shortName evidence="2">S-OPA1</shortName>
        </recommendedName>
    </component>
</protein>
<name>OPA1_CHICK</name>
<feature type="transit peptide" description="Mitochondrion" evidence="4">
    <location>
        <begin position="1"/>
        <end position="86"/>
    </location>
</feature>
<feature type="chain" id="PRO_0000257996" description="Dynamin-like GTPase OPA1, long form">
    <location>
        <begin position="87"/>
        <end position="977"/>
    </location>
</feature>
<feature type="chain" id="PRO_0000417513" description="Dynamin-like GTPase OPA1, short form" evidence="4">
    <location>
        <begin position="212"/>
        <end position="977"/>
    </location>
</feature>
<feature type="topological domain" description="Mitochondrial matrix" evidence="2">
    <location>
        <begin position="87"/>
        <end position="95"/>
    </location>
</feature>
<feature type="transmembrane region" description="Helical" evidence="5">
    <location>
        <begin position="96"/>
        <end position="112"/>
    </location>
</feature>
<feature type="topological domain" description="Mitochondrial intermembrane" evidence="2">
    <location>
        <begin position="113"/>
        <end position="787"/>
    </location>
</feature>
<feature type="intramembrane region" evidence="2">
    <location>
        <begin position="788"/>
        <end position="798"/>
    </location>
</feature>
<feature type="topological domain" description="Mitochondrial intermembrane" evidence="2">
    <location>
        <begin position="799"/>
        <end position="977"/>
    </location>
</feature>
<feature type="domain" description="Dynamin-type G" evidence="6">
    <location>
        <begin position="302"/>
        <end position="578"/>
    </location>
</feature>
<feature type="region of interest" description="G1 motif" evidence="6">
    <location>
        <begin position="312"/>
        <end position="319"/>
    </location>
</feature>
<feature type="region of interest" description="G2 motif" evidence="6">
    <location>
        <begin position="338"/>
        <end position="341"/>
    </location>
</feature>
<feature type="region of interest" description="G3 motif" evidence="6">
    <location>
        <begin position="415"/>
        <end position="418"/>
    </location>
</feature>
<feature type="region of interest" description="G4 motif" evidence="6">
    <location>
        <begin position="484"/>
        <end position="487"/>
    </location>
</feature>
<feature type="region of interest" description="G5 motif" evidence="6">
    <location>
        <begin position="518"/>
        <end position="521"/>
    </location>
</feature>
<feature type="region of interest" description="Stalk region" evidence="2">
    <location>
        <begin position="606"/>
        <end position="853"/>
    </location>
</feature>
<feature type="region of interest" description="Paddle region" evidence="2">
    <location>
        <begin position="753"/>
        <end position="873"/>
    </location>
</feature>
<feature type="region of interest" description="Stalk region" evidence="2">
    <location>
        <begin position="891"/>
        <end position="945"/>
    </location>
</feature>
<feature type="coiled-coil region" evidence="5">
    <location>
        <begin position="224"/>
        <end position="271"/>
    </location>
</feature>
<feature type="coiled-coil region" evidence="5">
    <location>
        <begin position="911"/>
        <end position="977"/>
    </location>
</feature>
<feature type="binding site" evidence="2">
    <location>
        <position position="315"/>
    </location>
    <ligand>
        <name>GTP</name>
        <dbReference type="ChEBI" id="CHEBI:37565"/>
    </ligand>
</feature>
<feature type="binding site" evidence="2">
    <location>
        <position position="317"/>
    </location>
    <ligand>
        <name>GTP</name>
        <dbReference type="ChEBI" id="CHEBI:37565"/>
    </ligand>
</feature>
<feature type="binding site" evidence="2">
    <location>
        <position position="318"/>
    </location>
    <ligand>
        <name>GTP</name>
        <dbReference type="ChEBI" id="CHEBI:37565"/>
    </ligand>
</feature>
<feature type="binding site" evidence="2">
    <location>
        <position position="319"/>
    </location>
    <ligand>
        <name>GTP</name>
        <dbReference type="ChEBI" id="CHEBI:37565"/>
    </ligand>
</feature>
<feature type="binding site" evidence="2">
    <location>
        <position position="319"/>
    </location>
    <ligand>
        <name>Mg(2+)</name>
        <dbReference type="ChEBI" id="CHEBI:18420"/>
    </ligand>
</feature>
<feature type="binding site" evidence="2">
    <location>
        <position position="320"/>
    </location>
    <ligand>
        <name>GTP</name>
        <dbReference type="ChEBI" id="CHEBI:37565"/>
    </ligand>
</feature>
<feature type="binding site" evidence="2">
    <location>
        <position position="334"/>
    </location>
    <ligand>
        <name>GTP</name>
        <dbReference type="ChEBI" id="CHEBI:37565"/>
    </ligand>
</feature>
<feature type="binding site" evidence="2">
    <location>
        <position position="340"/>
    </location>
    <ligand>
        <name>Mg(2+)</name>
        <dbReference type="ChEBI" id="CHEBI:18420"/>
    </ligand>
</feature>
<feature type="binding site" evidence="2">
    <location>
        <position position="415"/>
    </location>
    <ligand>
        <name>Mg(2+)</name>
        <dbReference type="ChEBI" id="CHEBI:18420"/>
    </ligand>
</feature>
<feature type="binding site" evidence="2">
    <location>
        <position position="485"/>
    </location>
    <ligand>
        <name>GTP</name>
        <dbReference type="ChEBI" id="CHEBI:37565"/>
    </ligand>
</feature>
<feature type="binding site" evidence="2">
    <location>
        <position position="487"/>
    </location>
    <ligand>
        <name>GTP</name>
        <dbReference type="ChEBI" id="CHEBI:37565"/>
    </ligand>
</feature>
<feature type="binding site" evidence="2">
    <location>
        <position position="520"/>
    </location>
    <ligand>
        <name>GTP</name>
        <dbReference type="ChEBI" id="CHEBI:37565"/>
    </ligand>
</feature>
<feature type="site" description="Cleavage at site S1" evidence="4">
    <location>
        <begin position="211"/>
        <end position="212"/>
    </location>
</feature>
<feature type="disulfide bond" evidence="2">
    <location>
        <begin position="873"/>
        <end position="891"/>
    </location>
</feature>
<organism>
    <name type="scientific">Gallus gallus</name>
    <name type="common">Chicken</name>
    <dbReference type="NCBI Taxonomy" id="9031"/>
    <lineage>
        <taxon>Eukaryota</taxon>
        <taxon>Metazoa</taxon>
        <taxon>Chordata</taxon>
        <taxon>Craniata</taxon>
        <taxon>Vertebrata</taxon>
        <taxon>Euteleostomi</taxon>
        <taxon>Archelosauria</taxon>
        <taxon>Archosauria</taxon>
        <taxon>Dinosauria</taxon>
        <taxon>Saurischia</taxon>
        <taxon>Theropoda</taxon>
        <taxon>Coelurosauria</taxon>
        <taxon>Aves</taxon>
        <taxon>Neognathae</taxon>
        <taxon>Galloanserae</taxon>
        <taxon>Galliformes</taxon>
        <taxon>Phasianidae</taxon>
        <taxon>Phasianinae</taxon>
        <taxon>Gallus</taxon>
    </lineage>
</organism>
<gene>
    <name evidence="2" type="primary">OPA1</name>
    <name type="ORF">RCJMB04_1m16</name>
</gene>
<evidence type="ECO:0000250" key="1">
    <source>
        <dbReference type="UniProtKB" id="G0SGC7"/>
    </source>
</evidence>
<evidence type="ECO:0000250" key="2">
    <source>
        <dbReference type="UniProtKB" id="O60313"/>
    </source>
</evidence>
<evidence type="ECO:0000250" key="3">
    <source>
        <dbReference type="UniProtKB" id="P58281"/>
    </source>
</evidence>
<evidence type="ECO:0000250" key="4">
    <source>
        <dbReference type="UniProtKB" id="Q2TA68"/>
    </source>
</evidence>
<evidence type="ECO:0000255" key="5"/>
<evidence type="ECO:0000255" key="6">
    <source>
        <dbReference type="PROSITE-ProRule" id="PRU01055"/>
    </source>
</evidence>
<evidence type="ECO:0000305" key="7"/>
<evidence type="ECO:0000312" key="8">
    <source>
        <dbReference type="EMBL" id="CAH65035.1"/>
    </source>
</evidence>